<evidence type="ECO:0000250" key="1">
    <source>
        <dbReference type="UniProtKB" id="Q16775"/>
    </source>
</evidence>
<evidence type="ECO:0000250" key="2">
    <source>
        <dbReference type="UniProtKB" id="Q99KB8"/>
    </source>
</evidence>
<evidence type="ECO:0000255" key="3"/>
<evidence type="ECO:0000269" key="4">
    <source>
    </source>
</evidence>
<evidence type="ECO:0000269" key="5">
    <source>
    </source>
</evidence>
<evidence type="ECO:0000303" key="6">
    <source>
    </source>
</evidence>
<evidence type="ECO:0000303" key="7">
    <source ref="2"/>
</evidence>
<evidence type="ECO:0000305" key="8"/>
<evidence type="ECO:0000305" key="9">
    <source>
    </source>
</evidence>
<reference key="1">
    <citation type="journal article" date="1997" name="Biochem. Biophys. Res. Commun.">
        <title>cDNA cloning and characterization of a rat spermatogenesis-associated protein RSP29.</title>
        <authorList>
            <person name="Ji X."/>
            <person name="Moore H.D.M."/>
            <person name="Russell R.G.G."/>
            <person name="Watts D.J."/>
        </authorList>
    </citation>
    <scope>NUCLEOTIDE SEQUENCE [GENOMIC DNA / MRNA] (ISOFORM 2)</scope>
    <scope>TISSUE SPECIFICITY</scope>
    <source>
        <tissue>Testis</tissue>
    </source>
</reference>
<reference key="2">
    <citation type="submission" date="2008-09" db="EMBL/GenBank/DDBJ databases">
        <title>Euratools EST.</title>
        <authorList>
            <person name="Kube M."/>
            <person name="Klages S."/>
            <person name="Kuhl H."/>
            <person name="Thiel J."/>
            <person name="Beck A."/>
            <person name="Reinhardt R."/>
        </authorList>
    </citation>
    <scope>NUCLEOTIDE SEQUENCE [LARGE SCALE MRNA] OF 1-179 (ISOFORMS 1 AND 2)</scope>
</reference>
<reference key="3">
    <citation type="journal article" date="2004" name="Genome Res.">
        <title>The status, quality, and expansion of the NIH full-length cDNA project: the Mammalian Gene Collection (MGC).</title>
        <authorList>
            <consortium name="The MGC Project Team"/>
        </authorList>
    </citation>
    <scope>NUCLEOTIDE SEQUENCE [LARGE SCALE MRNA] OF 6-309 (ISOFORM 1/2)</scope>
    <source>
        <tissue>Placenta</tissue>
    </source>
</reference>
<reference key="4">
    <citation type="submission" date="2007-04" db="UniProtKB">
        <authorList>
            <person name="Lubec G."/>
            <person name="Afjehi-Sadat L."/>
            <person name="Chen W.-Q."/>
        </authorList>
    </citation>
    <scope>PROTEIN SEQUENCE OF 96-114 AND 204-211</scope>
    <scope>IDENTIFICATION BY MASS SPECTROMETRY</scope>
    <source>
        <strain>Sprague-Dawley</strain>
        <tissue>Hippocampus</tissue>
        <tissue>Spinal cord</tissue>
    </source>
</reference>
<reference key="5">
    <citation type="journal article" date="1995" name="Mech. Ageing Dev.">
        <title>Contents of D-lactate and its related metabolites as well as enzyme activities in the liver, muscle and blood plasma of aging rats.</title>
        <authorList>
            <person name="Kawase M."/>
            <person name="Kondoh C."/>
            <person name="Matsumoto S."/>
            <person name="Teshigawara M."/>
            <person name="Chisaka Y."/>
            <person name="Higashiura M."/>
            <person name="Nakata K."/>
            <person name="Ohmori S."/>
        </authorList>
    </citation>
    <scope>FUNCTION</scope>
    <scope>CATALYTIC ACTIVITY</scope>
</reference>
<feature type="transit peptide" description="Mitochondrion" evidence="3">
    <location>
        <begin position="1"/>
        <end position="24"/>
    </location>
</feature>
<feature type="chain" id="PRO_0000192344" description="Hydroxyacylglutathione hydrolase, mitochondrial">
    <location>
        <begin position="25"/>
        <end position="309"/>
    </location>
</feature>
<feature type="binding site" evidence="1">
    <location>
        <position position="103"/>
    </location>
    <ligand>
        <name>Zn(2+)</name>
        <dbReference type="ChEBI" id="CHEBI:29105"/>
        <label>1</label>
    </ligand>
</feature>
<feature type="binding site" evidence="1">
    <location>
        <position position="105"/>
    </location>
    <ligand>
        <name>Zn(2+)</name>
        <dbReference type="ChEBI" id="CHEBI:29105"/>
        <label>1</label>
    </ligand>
</feature>
<feature type="binding site" evidence="1">
    <location>
        <position position="107"/>
    </location>
    <ligand>
        <name>Zn(2+)</name>
        <dbReference type="ChEBI" id="CHEBI:29105"/>
        <label>2</label>
    </ligand>
</feature>
<feature type="binding site" evidence="1">
    <location>
        <position position="108"/>
    </location>
    <ligand>
        <name>Zn(2+)</name>
        <dbReference type="ChEBI" id="CHEBI:29105"/>
        <label>2</label>
    </ligand>
</feature>
<feature type="binding site" evidence="1">
    <location>
        <position position="159"/>
    </location>
    <ligand>
        <name>Zn(2+)</name>
        <dbReference type="ChEBI" id="CHEBI:29105"/>
        <label>1</label>
    </ligand>
</feature>
<feature type="binding site" evidence="1">
    <location>
        <position position="183"/>
    </location>
    <ligand>
        <name>Zn(2+)</name>
        <dbReference type="ChEBI" id="CHEBI:29105"/>
        <label>1</label>
    </ligand>
</feature>
<feature type="binding site" evidence="1">
    <location>
        <position position="183"/>
    </location>
    <ligand>
        <name>Zn(2+)</name>
        <dbReference type="ChEBI" id="CHEBI:29105"/>
        <label>2</label>
    </ligand>
</feature>
<feature type="binding site" evidence="1">
    <location>
        <begin position="192"/>
        <end position="194"/>
    </location>
    <ligand>
        <name>substrate</name>
    </ligand>
</feature>
<feature type="binding site" evidence="1">
    <location>
        <begin position="222"/>
        <end position="224"/>
    </location>
    <ligand>
        <name>substrate</name>
    </ligand>
</feature>
<feature type="binding site" evidence="1">
    <location>
        <position position="222"/>
    </location>
    <ligand>
        <name>Zn(2+)</name>
        <dbReference type="ChEBI" id="CHEBI:29105"/>
        <label>2</label>
    </ligand>
</feature>
<feature type="binding site" evidence="1">
    <location>
        <begin position="298"/>
        <end position="301"/>
    </location>
    <ligand>
        <name>substrate</name>
    </ligand>
</feature>
<feature type="modified residue" description="N6-acetyllysine" evidence="2">
    <location>
        <position position="90"/>
    </location>
</feature>
<feature type="modified residue" description="N6-acetyllysine" evidence="2">
    <location>
        <position position="117"/>
    </location>
</feature>
<feature type="modified residue" description="N6-acetyllysine; alternate" evidence="1">
    <location>
        <position position="230"/>
    </location>
</feature>
<feature type="modified residue" description="N6-succinyllysine; alternate" evidence="2">
    <location>
        <position position="230"/>
    </location>
</feature>
<feature type="splice variant" id="VSP_037932" description="In isoform 2." evidence="6 7">
    <location>
        <begin position="1"/>
        <end position="49"/>
    </location>
</feature>
<feature type="sequence conflict" description="In Ref. 2; FM068341 and 3; AAH97301." evidence="8" ref="2 3">
    <original>E</original>
    <variation>Q</variation>
    <location>
        <position position="145"/>
    </location>
</feature>
<feature type="sequence conflict" description="In Ref. 2; FM068341." evidence="8" ref="2">
    <original>S</original>
    <variation>N</variation>
    <location>
        <position position="173"/>
    </location>
</feature>
<feature type="sequence conflict" description="In Ref. 3; AAH97301." evidence="8" ref="3">
    <original>I</original>
    <variation>Y</variation>
    <location>
        <position position="219"/>
    </location>
</feature>
<name>GLO2_RAT</name>
<proteinExistence type="evidence at protein level"/>
<comment type="function">
    <text evidence="4">Thiolesterase that catalyzes the hydrolysis of S-D-lactoyl-glutathione to form glutathione and D-lactic acid.</text>
</comment>
<comment type="catalytic activity">
    <reaction evidence="4">
        <text>an S-(2-hydroxyacyl)glutathione + H2O = a 2-hydroxy carboxylate + glutathione + H(+)</text>
        <dbReference type="Rhea" id="RHEA:21864"/>
        <dbReference type="ChEBI" id="CHEBI:15377"/>
        <dbReference type="ChEBI" id="CHEBI:15378"/>
        <dbReference type="ChEBI" id="CHEBI:57925"/>
        <dbReference type="ChEBI" id="CHEBI:58896"/>
        <dbReference type="ChEBI" id="CHEBI:71261"/>
        <dbReference type="EC" id="3.1.2.6"/>
    </reaction>
    <physiologicalReaction direction="left-to-right" evidence="4">
        <dbReference type="Rhea" id="RHEA:21865"/>
    </physiologicalReaction>
</comment>
<comment type="catalytic activity">
    <reaction evidence="4">
        <text>(R)-S-lactoylglutathione + H2O = (R)-lactate + glutathione + H(+)</text>
        <dbReference type="Rhea" id="RHEA:25245"/>
        <dbReference type="ChEBI" id="CHEBI:15377"/>
        <dbReference type="ChEBI" id="CHEBI:15378"/>
        <dbReference type="ChEBI" id="CHEBI:16004"/>
        <dbReference type="ChEBI" id="CHEBI:57474"/>
        <dbReference type="ChEBI" id="CHEBI:57925"/>
        <dbReference type="EC" id="3.1.2.6"/>
    </reaction>
    <physiologicalReaction direction="left-to-right" evidence="9">
        <dbReference type="Rhea" id="RHEA:25246"/>
    </physiologicalReaction>
</comment>
<comment type="cofactor">
    <cofactor evidence="1">
        <name>Zn(2+)</name>
        <dbReference type="ChEBI" id="CHEBI:29105"/>
    </cofactor>
    <text evidence="1">Binds 2 Zn(2+) ions per subunit.</text>
</comment>
<comment type="pathway">
    <text>Secondary metabolite metabolism; methylglyoxal degradation; (R)-lactate from methylglyoxal: step 2/2.</text>
</comment>
<comment type="subunit">
    <text evidence="1">Monomer.</text>
</comment>
<comment type="subcellular location">
    <molecule>Isoform 1</molecule>
    <subcellularLocation>
        <location evidence="1">Mitochondrion matrix</location>
    </subcellularLocation>
</comment>
<comment type="subcellular location">
    <molecule>Isoform 2</molecule>
    <subcellularLocation>
        <location evidence="1">Cytoplasm</location>
    </subcellularLocation>
</comment>
<comment type="alternative products">
    <event type="alternative splicing"/>
    <event type="alternative initiation"/>
    <isoform>
        <id>O35952-1</id>
        <name>1</name>
        <sequence type="displayed"/>
    </isoform>
    <isoform>
        <id>O35952-2</id>
        <name>2</name>
        <sequence type="described" ref="VSP_037932"/>
    </isoform>
</comment>
<comment type="tissue specificity">
    <text evidence="5">Strongly expressed in testis, skeletal muscle and heart. Weakly expressed in placenta, pancreas, spleen and peripheral blood leukocytes.</text>
</comment>
<comment type="miscellaneous">
    <molecule>Isoform 2</molecule>
    <text evidence="8">Produced by alternative splicing. Also produced by alternative initiation at Met-50 of isoform 1. Alternative initiation has been proven in human.</text>
</comment>
<comment type="similarity">
    <text evidence="8">Belongs to the metallo-beta-lactamase superfamily. Glyoxalase II family.</text>
</comment>
<comment type="caution">
    <text evidence="8">Only one single gene encoding glyoxalase II has been identified in vertebrates. In yeast and higher plants, separate genes encode the cytosolic and mitochondrial forms of glyoxalase II.</text>
</comment>
<dbReference type="EC" id="3.1.2.6" evidence="4"/>
<dbReference type="EMBL" id="U97667">
    <property type="protein sequence ID" value="AAC39944.1"/>
    <property type="molecule type" value="Genomic_DNA"/>
</dbReference>
<dbReference type="EMBL" id="FM068341">
    <property type="status" value="NOT_ANNOTATED_CDS"/>
    <property type="molecule type" value="mRNA"/>
</dbReference>
<dbReference type="EMBL" id="BC097301">
    <property type="protein sequence ID" value="AAH97301.1"/>
    <property type="molecule type" value="mRNA"/>
</dbReference>
<dbReference type="PIR" id="JC5826">
    <property type="entry name" value="JC5826"/>
</dbReference>
<dbReference type="RefSeq" id="NP_203500.2">
    <property type="nucleotide sequence ID" value="NM_033349.2"/>
</dbReference>
<dbReference type="SMR" id="O35952"/>
<dbReference type="FunCoup" id="O35952">
    <property type="interactions" value="1584"/>
</dbReference>
<dbReference type="STRING" id="10116.ENSRNOP00000020192"/>
<dbReference type="BindingDB" id="O35952"/>
<dbReference type="ChEMBL" id="CHEMBL2262"/>
<dbReference type="CarbonylDB" id="O35952"/>
<dbReference type="iPTMnet" id="O35952"/>
<dbReference type="PhosphoSitePlus" id="O35952"/>
<dbReference type="jPOST" id="O35952"/>
<dbReference type="PaxDb" id="10116-ENSRNOP00000020192"/>
<dbReference type="GeneID" id="24439"/>
<dbReference type="KEGG" id="rno:24439"/>
<dbReference type="UCSC" id="RGD:2779">
    <molecule id="O35952-1"/>
    <property type="organism name" value="rat"/>
</dbReference>
<dbReference type="AGR" id="RGD:2779"/>
<dbReference type="CTD" id="3029"/>
<dbReference type="RGD" id="2779">
    <property type="gene designation" value="Hagh"/>
</dbReference>
<dbReference type="eggNOG" id="KOG0813">
    <property type="taxonomic scope" value="Eukaryota"/>
</dbReference>
<dbReference type="InParanoid" id="O35952"/>
<dbReference type="OrthoDB" id="515692at2759"/>
<dbReference type="PhylomeDB" id="O35952"/>
<dbReference type="BRENDA" id="3.1.2.6">
    <property type="organism ID" value="5301"/>
</dbReference>
<dbReference type="Reactome" id="R-RNO-70268">
    <property type="pathway name" value="Pyruvate metabolism"/>
</dbReference>
<dbReference type="SABIO-RK" id="O35952"/>
<dbReference type="UniPathway" id="UPA00619">
    <property type="reaction ID" value="UER00676"/>
</dbReference>
<dbReference type="PRO" id="PR:O35952"/>
<dbReference type="Proteomes" id="UP000002494">
    <property type="component" value="Unplaced"/>
</dbReference>
<dbReference type="GO" id="GO:0005759">
    <property type="term" value="C:mitochondrial matrix"/>
    <property type="evidence" value="ECO:0007669"/>
    <property type="project" value="UniProtKB-SubCell"/>
</dbReference>
<dbReference type="GO" id="GO:0005739">
    <property type="term" value="C:mitochondrion"/>
    <property type="evidence" value="ECO:0000318"/>
    <property type="project" value="GO_Central"/>
</dbReference>
<dbReference type="GO" id="GO:0004416">
    <property type="term" value="F:hydroxyacylglutathione hydrolase activity"/>
    <property type="evidence" value="ECO:0000314"/>
    <property type="project" value="RGD"/>
</dbReference>
<dbReference type="GO" id="GO:0046872">
    <property type="term" value="F:metal ion binding"/>
    <property type="evidence" value="ECO:0007669"/>
    <property type="project" value="UniProtKB-KW"/>
</dbReference>
<dbReference type="GO" id="GO:0006750">
    <property type="term" value="P:glutathione biosynthetic process"/>
    <property type="evidence" value="ECO:0000266"/>
    <property type="project" value="RGD"/>
</dbReference>
<dbReference type="GO" id="GO:0006749">
    <property type="term" value="P:glutathione metabolic process"/>
    <property type="evidence" value="ECO:0000314"/>
    <property type="project" value="RGD"/>
</dbReference>
<dbReference type="GO" id="GO:0019243">
    <property type="term" value="P:methylglyoxal catabolic process to D-lactate via S-lactoyl-glutathione"/>
    <property type="evidence" value="ECO:0007669"/>
    <property type="project" value="InterPro"/>
</dbReference>
<dbReference type="GO" id="GO:0007283">
    <property type="term" value="P:spermatogenesis"/>
    <property type="evidence" value="ECO:0000303"/>
    <property type="project" value="RGD"/>
</dbReference>
<dbReference type="CDD" id="cd07723">
    <property type="entry name" value="hydroxyacylglutathione_hydrolase_MBL-fold"/>
    <property type="match status" value="1"/>
</dbReference>
<dbReference type="FunFam" id="3.60.15.10:FF:000019">
    <property type="entry name" value="Hydroxyacylglutathione hydrolase, mitochondrial"/>
    <property type="match status" value="1"/>
</dbReference>
<dbReference type="Gene3D" id="3.60.15.10">
    <property type="entry name" value="Ribonuclease Z/Hydroxyacylglutathione hydrolase-like"/>
    <property type="match status" value="1"/>
</dbReference>
<dbReference type="HAMAP" id="MF_01374">
    <property type="entry name" value="Glyoxalase_2"/>
    <property type="match status" value="1"/>
</dbReference>
<dbReference type="InterPro" id="IPR035680">
    <property type="entry name" value="Clx_II_MBL"/>
</dbReference>
<dbReference type="InterPro" id="IPR032282">
    <property type="entry name" value="HAGH_C"/>
</dbReference>
<dbReference type="InterPro" id="IPR017782">
    <property type="entry name" value="Hydroxyacylglutathione_Hdrlase"/>
</dbReference>
<dbReference type="InterPro" id="IPR001279">
    <property type="entry name" value="Metallo-B-lactamas"/>
</dbReference>
<dbReference type="InterPro" id="IPR036866">
    <property type="entry name" value="RibonucZ/Hydroxyglut_hydro"/>
</dbReference>
<dbReference type="NCBIfam" id="TIGR03413">
    <property type="entry name" value="GSH_gloB"/>
    <property type="match status" value="1"/>
</dbReference>
<dbReference type="PANTHER" id="PTHR11935">
    <property type="entry name" value="BETA LACTAMASE DOMAIN"/>
    <property type="match status" value="1"/>
</dbReference>
<dbReference type="PANTHER" id="PTHR11935:SF80">
    <property type="entry name" value="HYDROXYACYLGLUTATHIONE HYDROLASE, MITOCHONDRIAL"/>
    <property type="match status" value="1"/>
</dbReference>
<dbReference type="Pfam" id="PF16123">
    <property type="entry name" value="HAGH_C"/>
    <property type="match status" value="1"/>
</dbReference>
<dbReference type="Pfam" id="PF00753">
    <property type="entry name" value="Lactamase_B"/>
    <property type="match status" value="1"/>
</dbReference>
<dbReference type="PIRSF" id="PIRSF005457">
    <property type="entry name" value="Glx"/>
    <property type="match status" value="1"/>
</dbReference>
<dbReference type="SMART" id="SM00849">
    <property type="entry name" value="Lactamase_B"/>
    <property type="match status" value="1"/>
</dbReference>
<dbReference type="SUPFAM" id="SSF56281">
    <property type="entry name" value="Metallo-hydrolase/oxidoreductase"/>
    <property type="match status" value="1"/>
</dbReference>
<gene>
    <name type="primary">Hagh</name>
    <name type="synonym">Rsp29</name>
</gene>
<sequence>MVLGRGSLCLRSLSVLGAACARRGLGQALLGLSLCHTDFRKNLTVQQDMMKIELLPALTDNYMYLIIDEDTQEAAVVDPVQPQKVIETVKKHRVKLTTVLTTHHHWDHAGGNEKLVKLEPGLKVYGGDDRIGALTHKVTHLSTLEVGSLSVKCLSTPCHTSGHICYFVSKPGSSEPSAVFTGDTLFVAGCGKFYEGTADEMYKALLEVLGRLPPDTKVICGHEYTVNNLKFARHVEPGNTAVQEKLAWAKEKNAIGEPTVPSTLAEEFTYNPFMRVKEKTVQQHAGETDPVTTMRAIRREKDQFKVPRD</sequence>
<keyword id="KW-0007">Acetylation</keyword>
<keyword id="KW-0024">Alternative initiation</keyword>
<keyword id="KW-0025">Alternative splicing</keyword>
<keyword id="KW-0963">Cytoplasm</keyword>
<keyword id="KW-0903">Direct protein sequencing</keyword>
<keyword id="KW-0378">Hydrolase</keyword>
<keyword id="KW-0479">Metal-binding</keyword>
<keyword id="KW-0496">Mitochondrion</keyword>
<keyword id="KW-1185">Reference proteome</keyword>
<keyword id="KW-0809">Transit peptide</keyword>
<keyword id="KW-0862">Zinc</keyword>
<protein>
    <recommendedName>
        <fullName>Hydroxyacylglutathione hydrolase, mitochondrial</fullName>
        <ecNumber evidence="4">3.1.2.6</ecNumber>
    </recommendedName>
    <alternativeName>
        <fullName>Glyoxalase II</fullName>
        <shortName>Glx II</shortName>
    </alternativeName>
    <alternativeName>
        <fullName>Round spermatid protein RSP29</fullName>
    </alternativeName>
</protein>
<organism>
    <name type="scientific">Rattus norvegicus</name>
    <name type="common">Rat</name>
    <dbReference type="NCBI Taxonomy" id="10116"/>
    <lineage>
        <taxon>Eukaryota</taxon>
        <taxon>Metazoa</taxon>
        <taxon>Chordata</taxon>
        <taxon>Craniata</taxon>
        <taxon>Vertebrata</taxon>
        <taxon>Euteleostomi</taxon>
        <taxon>Mammalia</taxon>
        <taxon>Eutheria</taxon>
        <taxon>Euarchontoglires</taxon>
        <taxon>Glires</taxon>
        <taxon>Rodentia</taxon>
        <taxon>Myomorpha</taxon>
        <taxon>Muroidea</taxon>
        <taxon>Muridae</taxon>
        <taxon>Murinae</taxon>
        <taxon>Rattus</taxon>
    </lineage>
</organism>
<accession>O35952</accession>
<accession>Q4V8M8</accession>